<keyword id="KW-0903">Direct protein sequencing</keyword>
<keyword id="KW-0964">Secreted</keyword>
<sequence>HADGIYTSDVASLTDYLKSKRFVESLSNYNKRQNDRRM</sequence>
<organism>
    <name type="scientific">Hydrolagus colliei</name>
    <name type="common">Spotted ratfish</name>
    <name type="synonym">Chimaera colliei</name>
    <dbReference type="NCBI Taxonomy" id="7873"/>
    <lineage>
        <taxon>Eukaryota</taxon>
        <taxon>Metazoa</taxon>
        <taxon>Chordata</taxon>
        <taxon>Craniata</taxon>
        <taxon>Vertebrata</taxon>
        <taxon>Chondrichthyes</taxon>
        <taxon>Holocephali</taxon>
        <taxon>Chimaeriformes</taxon>
        <taxon>Chimaeridae</taxon>
        <taxon>Hydrolagus</taxon>
    </lineage>
</organism>
<dbReference type="PIR" id="S06873">
    <property type="entry name" value="GCFIK"/>
</dbReference>
<dbReference type="SMR" id="P23063"/>
<dbReference type="GO" id="GO:0005576">
    <property type="term" value="C:extracellular region"/>
    <property type="evidence" value="ECO:0007669"/>
    <property type="project" value="UniProtKB-SubCell"/>
</dbReference>
<dbReference type="GO" id="GO:0005179">
    <property type="term" value="F:hormone activity"/>
    <property type="evidence" value="ECO:0007669"/>
    <property type="project" value="InterPro"/>
</dbReference>
<dbReference type="Gene3D" id="6.10.250.590">
    <property type="match status" value="1"/>
</dbReference>
<dbReference type="InterPro" id="IPR000532">
    <property type="entry name" value="Glucagon_GIP_secretin_VIP"/>
</dbReference>
<dbReference type="SMART" id="SM00070">
    <property type="entry name" value="GLUCA"/>
    <property type="match status" value="1"/>
</dbReference>
<dbReference type="PROSITE" id="PS00260">
    <property type="entry name" value="GLUCAGON"/>
    <property type="match status" value="1"/>
</dbReference>
<feature type="peptide" id="PRO_0000044745" description="Glucagon-like peptide">
    <location>
        <begin position="1"/>
        <end position="38"/>
    </location>
</feature>
<feature type="sequence variant" description="In the major form.">
    <location>
        <begin position="36"/>
        <end position="38"/>
    </location>
</feature>
<reference key="1">
    <citation type="journal article" date="1989" name="Gen. Comp. Endocrinol.">
        <title>Multiple molecular forms of insulin and glucagon-like peptide from the Pacific ratfish (Hydrolagus colliei).</title>
        <authorList>
            <person name="Conlon J.M."/>
            <person name="Goeke R."/>
            <person name="Andrews P.C."/>
            <person name="Thim L."/>
        </authorList>
    </citation>
    <scope>PROTEIN SEQUENCE</scope>
    <source>
        <tissue>Pancreas</tissue>
    </source>
</reference>
<evidence type="ECO:0000305" key="1"/>
<accession>P23063</accession>
<comment type="subcellular location">
    <subcellularLocation>
        <location>Secreted</location>
    </subcellularLocation>
</comment>
<comment type="similarity">
    <text evidence="1">Belongs to the glucagon family.</text>
</comment>
<name>GLUCL_HYDCO</name>
<protein>
    <recommendedName>
        <fullName>Glucagon-like peptide</fullName>
        <shortName>GLP</shortName>
    </recommendedName>
</protein>
<proteinExistence type="evidence at protein level"/>